<reference key="1">
    <citation type="journal article" date="2001" name="DNA Res.">
        <title>Complete genomic sequence of the filamentous nitrogen-fixing cyanobacterium Anabaena sp. strain PCC 7120.</title>
        <authorList>
            <person name="Kaneko T."/>
            <person name="Nakamura Y."/>
            <person name="Wolk C.P."/>
            <person name="Kuritz T."/>
            <person name="Sasamoto S."/>
            <person name="Watanabe A."/>
            <person name="Iriguchi M."/>
            <person name="Ishikawa A."/>
            <person name="Kawashima K."/>
            <person name="Kimura T."/>
            <person name="Kishida Y."/>
            <person name="Kohara M."/>
            <person name="Matsumoto M."/>
            <person name="Matsuno A."/>
            <person name="Muraki A."/>
            <person name="Nakazaki N."/>
            <person name="Shimpo S."/>
            <person name="Sugimoto M."/>
            <person name="Takazawa M."/>
            <person name="Yamada M."/>
            <person name="Yasuda M."/>
            <person name="Tabata S."/>
        </authorList>
    </citation>
    <scope>NUCLEOTIDE SEQUENCE [LARGE SCALE GENOMIC DNA]</scope>
    <source>
        <strain>PCC 7120 / SAG 25.82 / UTEX 2576</strain>
    </source>
</reference>
<comment type="function">
    <text evidence="1">Part of the ABC transporter complex PhnCDE involved in phosphonates import. Responsible for energy coupling to the transport system.</text>
</comment>
<comment type="catalytic activity">
    <reaction evidence="1">
        <text>phosphonate(out) + ATP + H2O = phosphonate(in) + ADP + phosphate + H(+)</text>
        <dbReference type="Rhea" id="RHEA:18065"/>
        <dbReference type="ChEBI" id="CHEBI:15377"/>
        <dbReference type="ChEBI" id="CHEBI:15378"/>
        <dbReference type="ChEBI" id="CHEBI:16215"/>
        <dbReference type="ChEBI" id="CHEBI:30616"/>
        <dbReference type="ChEBI" id="CHEBI:43474"/>
        <dbReference type="ChEBI" id="CHEBI:456216"/>
        <dbReference type="EC" id="7.3.2.2"/>
    </reaction>
</comment>
<comment type="subunit">
    <text evidence="1">The complex is composed of two ATP-binding proteins (PhnC), two transmembrane proteins (PhnE) and a solute-binding protein (PhnD).</text>
</comment>
<comment type="subcellular location">
    <subcellularLocation>
        <location evidence="1">Cell inner membrane</location>
        <topology evidence="1">Peripheral membrane protein</topology>
    </subcellularLocation>
</comment>
<comment type="similarity">
    <text evidence="1">Belongs to the ABC transporter superfamily. Phosphonates importer (TC 3.A.1.9.1) family.</text>
</comment>
<gene>
    <name evidence="1" type="primary">phnC2</name>
    <name type="ordered locus">all2357</name>
</gene>
<name>PHNC2_NOSS1</name>
<dbReference type="EC" id="7.3.2.2" evidence="1"/>
<dbReference type="EMBL" id="BA000019">
    <property type="protein sequence ID" value="BAB74056.1"/>
    <property type="molecule type" value="Genomic_DNA"/>
</dbReference>
<dbReference type="PIR" id="AF2100">
    <property type="entry name" value="AF2100"/>
</dbReference>
<dbReference type="RefSeq" id="WP_010996513.1">
    <property type="nucleotide sequence ID" value="NZ_RSCN01000004.1"/>
</dbReference>
<dbReference type="SMR" id="Q8YUI9"/>
<dbReference type="STRING" id="103690.gene:10494386"/>
<dbReference type="KEGG" id="ana:all2357"/>
<dbReference type="eggNOG" id="COG3638">
    <property type="taxonomic scope" value="Bacteria"/>
</dbReference>
<dbReference type="OrthoDB" id="9802264at2"/>
<dbReference type="Proteomes" id="UP000002483">
    <property type="component" value="Chromosome"/>
</dbReference>
<dbReference type="GO" id="GO:0005886">
    <property type="term" value="C:plasma membrane"/>
    <property type="evidence" value="ECO:0007669"/>
    <property type="project" value="UniProtKB-SubCell"/>
</dbReference>
<dbReference type="GO" id="GO:0015416">
    <property type="term" value="F:ABC-type phosphonate transporter activity"/>
    <property type="evidence" value="ECO:0007669"/>
    <property type="project" value="UniProtKB-EC"/>
</dbReference>
<dbReference type="GO" id="GO:0005524">
    <property type="term" value="F:ATP binding"/>
    <property type="evidence" value="ECO:0007669"/>
    <property type="project" value="UniProtKB-KW"/>
</dbReference>
<dbReference type="GO" id="GO:0016887">
    <property type="term" value="F:ATP hydrolysis activity"/>
    <property type="evidence" value="ECO:0007669"/>
    <property type="project" value="InterPro"/>
</dbReference>
<dbReference type="CDD" id="cd03256">
    <property type="entry name" value="ABC_PhnC_transporter"/>
    <property type="match status" value="1"/>
</dbReference>
<dbReference type="Gene3D" id="3.40.50.300">
    <property type="entry name" value="P-loop containing nucleotide triphosphate hydrolases"/>
    <property type="match status" value="1"/>
</dbReference>
<dbReference type="InterPro" id="IPR003593">
    <property type="entry name" value="AAA+_ATPase"/>
</dbReference>
<dbReference type="InterPro" id="IPR003439">
    <property type="entry name" value="ABC_transporter-like_ATP-bd"/>
</dbReference>
<dbReference type="InterPro" id="IPR017871">
    <property type="entry name" value="ABC_transporter-like_CS"/>
</dbReference>
<dbReference type="InterPro" id="IPR015854">
    <property type="entry name" value="ABC_transpr_LolD-like"/>
</dbReference>
<dbReference type="InterPro" id="IPR012693">
    <property type="entry name" value="ABC_transpr_PhnC"/>
</dbReference>
<dbReference type="InterPro" id="IPR027417">
    <property type="entry name" value="P-loop_NTPase"/>
</dbReference>
<dbReference type="PANTHER" id="PTHR24220">
    <property type="entry name" value="IMPORT ATP-BINDING PROTEIN"/>
    <property type="match status" value="1"/>
</dbReference>
<dbReference type="Pfam" id="PF00005">
    <property type="entry name" value="ABC_tran"/>
    <property type="match status" value="1"/>
</dbReference>
<dbReference type="SMART" id="SM00382">
    <property type="entry name" value="AAA"/>
    <property type="match status" value="1"/>
</dbReference>
<dbReference type="SUPFAM" id="SSF52540">
    <property type="entry name" value="P-loop containing nucleoside triphosphate hydrolases"/>
    <property type="match status" value="1"/>
</dbReference>
<dbReference type="PROSITE" id="PS00211">
    <property type="entry name" value="ABC_TRANSPORTER_1"/>
    <property type="match status" value="1"/>
</dbReference>
<dbReference type="PROSITE" id="PS50893">
    <property type="entry name" value="ABC_TRANSPORTER_2"/>
    <property type="match status" value="1"/>
</dbReference>
<dbReference type="PROSITE" id="PS51249">
    <property type="entry name" value="PHNC"/>
    <property type="match status" value="1"/>
</dbReference>
<organism>
    <name type="scientific">Nostoc sp. (strain PCC 7120 / SAG 25.82 / UTEX 2576)</name>
    <dbReference type="NCBI Taxonomy" id="103690"/>
    <lineage>
        <taxon>Bacteria</taxon>
        <taxon>Bacillati</taxon>
        <taxon>Cyanobacteriota</taxon>
        <taxon>Cyanophyceae</taxon>
        <taxon>Nostocales</taxon>
        <taxon>Nostocaceae</taxon>
        <taxon>Nostoc</taxon>
    </lineage>
</organism>
<protein>
    <recommendedName>
        <fullName evidence="1">Phosphonates import ATP-binding protein PhnC 2</fullName>
        <ecNumber evidence="1">7.3.2.2</ecNumber>
    </recommendedName>
</protein>
<sequence>MSDYVIECHNLETAYVGSLNRPILNEISCHIKQGEFVVLLGLNGAGKSTLLRSLVGLVPLVRGEVHINGVAMNSRILPQIRRDVGMLFQGGGLIPQLSAIENVLCGRLGTRTTWQTLFGFPKRDRLLALELLEQLGLRELAYQKTSKLSGGQQQRVAIARALIQSPQILLADEPTTGLDVIATQQVMETLAELHAQQGMTVIAVLHDLGIAARYAQRAIILDAGRIVYEGSCDNLQAQFVVNNQ</sequence>
<keyword id="KW-0067">ATP-binding</keyword>
<keyword id="KW-0997">Cell inner membrane</keyword>
<keyword id="KW-1003">Cell membrane</keyword>
<keyword id="KW-0472">Membrane</keyword>
<keyword id="KW-0547">Nucleotide-binding</keyword>
<keyword id="KW-0918">Phosphonate transport</keyword>
<keyword id="KW-1185">Reference proteome</keyword>
<keyword id="KW-1278">Translocase</keyword>
<keyword id="KW-0813">Transport</keyword>
<proteinExistence type="inferred from homology"/>
<accession>Q8YUI9</accession>
<feature type="chain" id="PRO_0000092686" description="Phosphonates import ATP-binding protein PhnC 2">
    <location>
        <begin position="1"/>
        <end position="244"/>
    </location>
</feature>
<feature type="domain" description="ABC transporter" evidence="1">
    <location>
        <begin position="6"/>
        <end position="244"/>
    </location>
</feature>
<feature type="binding site" evidence="1">
    <location>
        <begin position="41"/>
        <end position="48"/>
    </location>
    <ligand>
        <name>ATP</name>
        <dbReference type="ChEBI" id="CHEBI:30616"/>
    </ligand>
</feature>
<evidence type="ECO:0000255" key="1">
    <source>
        <dbReference type="HAMAP-Rule" id="MF_01713"/>
    </source>
</evidence>